<dbReference type="EMBL" id="CU207211">
    <property type="protein sequence ID" value="CAL62299.1"/>
    <property type="molecule type" value="Genomic_DNA"/>
</dbReference>
<dbReference type="SMR" id="A4G712"/>
<dbReference type="STRING" id="204773.HEAR2162"/>
<dbReference type="KEGG" id="har:HEAR2162"/>
<dbReference type="eggNOG" id="COG0360">
    <property type="taxonomic scope" value="Bacteria"/>
</dbReference>
<dbReference type="HOGENOM" id="CLU_113441_6_1_4"/>
<dbReference type="OrthoDB" id="9812702at2"/>
<dbReference type="Proteomes" id="UP000006697">
    <property type="component" value="Chromosome"/>
</dbReference>
<dbReference type="GO" id="GO:0022627">
    <property type="term" value="C:cytosolic small ribosomal subunit"/>
    <property type="evidence" value="ECO:0007669"/>
    <property type="project" value="TreeGrafter"/>
</dbReference>
<dbReference type="GO" id="GO:0070181">
    <property type="term" value="F:small ribosomal subunit rRNA binding"/>
    <property type="evidence" value="ECO:0007669"/>
    <property type="project" value="TreeGrafter"/>
</dbReference>
<dbReference type="GO" id="GO:0003735">
    <property type="term" value="F:structural constituent of ribosome"/>
    <property type="evidence" value="ECO:0007669"/>
    <property type="project" value="InterPro"/>
</dbReference>
<dbReference type="GO" id="GO:0006412">
    <property type="term" value="P:translation"/>
    <property type="evidence" value="ECO:0007669"/>
    <property type="project" value="UniProtKB-UniRule"/>
</dbReference>
<dbReference type="CDD" id="cd00473">
    <property type="entry name" value="bS6"/>
    <property type="match status" value="1"/>
</dbReference>
<dbReference type="Gene3D" id="3.30.70.60">
    <property type="match status" value="1"/>
</dbReference>
<dbReference type="HAMAP" id="MF_00360">
    <property type="entry name" value="Ribosomal_bS6"/>
    <property type="match status" value="1"/>
</dbReference>
<dbReference type="InterPro" id="IPR000529">
    <property type="entry name" value="Ribosomal_bS6"/>
</dbReference>
<dbReference type="InterPro" id="IPR035980">
    <property type="entry name" value="Ribosomal_bS6_sf"/>
</dbReference>
<dbReference type="InterPro" id="IPR020814">
    <property type="entry name" value="Ribosomal_S6_plastid/chlpt"/>
</dbReference>
<dbReference type="InterPro" id="IPR014717">
    <property type="entry name" value="Transl_elong_EF1B/ribsomal_bS6"/>
</dbReference>
<dbReference type="NCBIfam" id="TIGR00166">
    <property type="entry name" value="S6"/>
    <property type="match status" value="1"/>
</dbReference>
<dbReference type="PANTHER" id="PTHR21011">
    <property type="entry name" value="MITOCHONDRIAL 28S RIBOSOMAL PROTEIN S6"/>
    <property type="match status" value="1"/>
</dbReference>
<dbReference type="PANTHER" id="PTHR21011:SF1">
    <property type="entry name" value="SMALL RIBOSOMAL SUBUNIT PROTEIN BS6M"/>
    <property type="match status" value="1"/>
</dbReference>
<dbReference type="Pfam" id="PF01250">
    <property type="entry name" value="Ribosomal_S6"/>
    <property type="match status" value="1"/>
</dbReference>
<dbReference type="SUPFAM" id="SSF54995">
    <property type="entry name" value="Ribosomal protein S6"/>
    <property type="match status" value="1"/>
</dbReference>
<evidence type="ECO:0000255" key="1">
    <source>
        <dbReference type="HAMAP-Rule" id="MF_00360"/>
    </source>
</evidence>
<evidence type="ECO:0000256" key="2">
    <source>
        <dbReference type="SAM" id="MobiDB-lite"/>
    </source>
</evidence>
<evidence type="ECO:0000305" key="3"/>
<protein>
    <recommendedName>
        <fullName evidence="1">Small ribosomal subunit protein bS6</fullName>
    </recommendedName>
    <alternativeName>
        <fullName evidence="3">30S ribosomal protein S6</fullName>
    </alternativeName>
</protein>
<reference key="1">
    <citation type="journal article" date="2007" name="PLoS Genet.">
        <title>A tale of two oxidation states: bacterial colonization of arsenic-rich environments.</title>
        <authorList>
            <person name="Muller D."/>
            <person name="Medigue C."/>
            <person name="Koechler S."/>
            <person name="Barbe V."/>
            <person name="Barakat M."/>
            <person name="Talla E."/>
            <person name="Bonnefoy V."/>
            <person name="Krin E."/>
            <person name="Arsene-Ploetze F."/>
            <person name="Carapito C."/>
            <person name="Chandler M."/>
            <person name="Cournoyer B."/>
            <person name="Cruveiller S."/>
            <person name="Dossat C."/>
            <person name="Duval S."/>
            <person name="Heymann M."/>
            <person name="Leize E."/>
            <person name="Lieutaud A."/>
            <person name="Lievremont D."/>
            <person name="Makita Y."/>
            <person name="Mangenot S."/>
            <person name="Nitschke W."/>
            <person name="Ortet P."/>
            <person name="Perdrial N."/>
            <person name="Schoepp B."/>
            <person name="Siguier P."/>
            <person name="Simeonova D.D."/>
            <person name="Rouy Z."/>
            <person name="Segurens B."/>
            <person name="Turlin E."/>
            <person name="Vallenet D."/>
            <person name="van Dorsselaer A."/>
            <person name="Weiss S."/>
            <person name="Weissenbach J."/>
            <person name="Lett M.-C."/>
            <person name="Danchin A."/>
            <person name="Bertin P.N."/>
        </authorList>
    </citation>
    <scope>NUCLEOTIDE SEQUENCE [LARGE SCALE GENOMIC DNA]</scope>
    <source>
        <strain>ULPAs1</strain>
    </source>
</reference>
<proteinExistence type="inferred from homology"/>
<comment type="function">
    <text evidence="1">Binds together with bS18 to 16S ribosomal RNA.</text>
</comment>
<comment type="similarity">
    <text evidence="1">Belongs to the bacterial ribosomal protein bS6 family.</text>
</comment>
<accession>A4G712</accession>
<name>RS6_HERAR</name>
<gene>
    <name evidence="1" type="primary">rpsF</name>
    <name type="ordered locus">HEAR2162</name>
</gene>
<organism>
    <name type="scientific">Herminiimonas arsenicoxydans</name>
    <dbReference type="NCBI Taxonomy" id="204773"/>
    <lineage>
        <taxon>Bacteria</taxon>
        <taxon>Pseudomonadati</taxon>
        <taxon>Pseudomonadota</taxon>
        <taxon>Betaproteobacteria</taxon>
        <taxon>Burkholderiales</taxon>
        <taxon>Oxalobacteraceae</taxon>
        <taxon>Herminiimonas</taxon>
    </lineage>
</organism>
<feature type="chain" id="PRO_1000005276" description="Small ribosomal subunit protein bS6">
    <location>
        <begin position="1"/>
        <end position="122"/>
    </location>
</feature>
<feature type="region of interest" description="Disordered" evidence="2">
    <location>
        <begin position="96"/>
        <end position="122"/>
    </location>
</feature>
<feature type="compositionally biased region" description="Basic and acidic residues" evidence="2">
    <location>
        <begin position="106"/>
        <end position="122"/>
    </location>
</feature>
<sequence>MRHYEIVFIVHPDQSEQVPAMIERYKGIVTARGGVVHRVEDWGRRQMAYLIQKLAKAHYVCLNIECDGETLTEIETGFKFNDAVLRHLTVKMKKAETAPSPMMKAVQKEDAAKSHRTEAPAA</sequence>
<keyword id="KW-1185">Reference proteome</keyword>
<keyword id="KW-0687">Ribonucleoprotein</keyword>
<keyword id="KW-0689">Ribosomal protein</keyword>
<keyword id="KW-0694">RNA-binding</keyword>
<keyword id="KW-0699">rRNA-binding</keyword>